<sequence>MAMKTSHVLLLCLMFVIGFVEARRSDTGPDISTPPSGSCGASIAEFNSSQILAKRAPPCRRPRLQNSEDVTHTTLP</sequence>
<keyword id="KW-0052">Apoplast</keyword>
<keyword id="KW-1003">Cell membrane</keyword>
<keyword id="KW-0165">Cleavage on pair of basic residues</keyword>
<keyword id="KW-0256">Endoplasmic reticulum</keyword>
<keyword id="KW-0472">Membrane</keyword>
<keyword id="KW-0611">Plant defense</keyword>
<keyword id="KW-1185">Reference proteome</keyword>
<keyword id="KW-0964">Secreted</keyword>
<keyword id="KW-0732">Signal</keyword>
<feature type="signal peptide" evidence="2">
    <location>
        <begin position="1"/>
        <end position="22"/>
    </location>
</feature>
<feature type="propeptide" id="PRO_0000457272" description="Removed in mature form" evidence="8">
    <location>
        <begin position="23"/>
        <end position="35"/>
    </location>
</feature>
<feature type="peptide" id="PRO_0000457273" description="Peptide ARACIN 1" evidence="8">
    <location>
        <begin position="36"/>
        <end position="76"/>
    </location>
</feature>
<feature type="region of interest" description="Disordered" evidence="3">
    <location>
        <begin position="56"/>
        <end position="76"/>
    </location>
</feature>
<feature type="short sequence motif" description="SCOOP motif" evidence="8">
    <location>
        <begin position="36"/>
        <end position="49"/>
    </location>
</feature>
<feature type="short sequence motif" description="SxS motif essential for MIK2 binding" evidence="1">
    <location>
        <begin position="36"/>
        <end position="38"/>
    </location>
</feature>
<feature type="compositionally biased region" description="Polar residues" evidence="3">
    <location>
        <begin position="64"/>
        <end position="76"/>
    </location>
</feature>
<accession>Q9FIW0</accession>
<accession>Q8GWS2</accession>
<comment type="function">
    <text evidence="1 5">Brassicaceae-specific phytocytokine (plant endogenous peptide released into the apoplast) perceived by MIK2 in a BAK1/SERK3 and SERK4 coreceptors-dependent manner, that modulates various physiological and antimicrobial processes including growth prevention and reactive oxygen species (ROS) response regulation (By similarity). Inhibits the fungal growth of Alternaria brassicicola, Sclerotinia sclerotiorum, Fusarium graminearum, yeast (Saccharomyces) and Botrytis cinerea, thus being an antimicrobial peptide (AMP) (PubMed:25593351). Promotes resistance to A.brassicicola and B.cinerea (PubMed:25593351).</text>
</comment>
<comment type="subunit">
    <text evidence="1">Interacts with MIK2 (via extracellular leucine-rich repeat domain); this interaction triggers the formation of complex between MIK2 and the BAK1/SERK3 and SERK4 coreceptors, and subsequent BAK1 activation by phosphorylation.</text>
</comment>
<comment type="subcellular location">
    <subcellularLocation>
        <location evidence="1">Cell membrane</location>
    </subcellularLocation>
    <subcellularLocation>
        <location evidence="1">Secreted</location>
        <location evidence="1">Extracellular space</location>
        <location evidence="1">Apoplast</location>
    </subcellularLocation>
    <subcellularLocation>
        <location evidence="5">Endoplasmic reticulum</location>
    </subcellularLocation>
    <text evidence="1 5">Observed in a reticular pattern and a perinuclear ring (PubMed:25593351). The precursor of ARACIN1 accumulates at the plasma membrane and is proteolytically cleaved to release the ARACIN1 in the apoplasm (By similarity).</text>
</comment>
<comment type="tissue specificity">
    <text evidence="5">Mainly expressed in young developing leaves, hydathodes, immature flowers and elongating pollen tubes.</text>
</comment>
<comment type="induction">
    <text evidence="4 5">Induced by increased levels of photorespiratory hydrogen peroxide H(2)O(2) (PubMed:21443605). Transiently up-regulated by cold stress but down-regulated by heat stress (PubMed:25593351). Induced by the necrotrophic fungus Botrytis cinerea in systemically infected leaves (PubMed:25593351). Accumulates in response to salicylic acid (SA, benzothiadiazole (BTH)) and jasmonic acid (MeJA) (PubMed:25593351).</text>
</comment>
<comment type="similarity">
    <text evidence="7">Belongs to the serine rich endogenous peptide (SCOOP) phytocytokine family.</text>
</comment>
<comment type="sequence caution" evidence="7">
    <conflict type="erroneous initiation">
        <sequence resource="EMBL-CDS" id="BAC43263"/>
    </conflict>
    <text>Truncated N-terminus.</text>
</comment>
<protein>
    <recommendedName>
        <fullName evidence="6">Peptide ARACIN 1</fullName>
    </recommendedName>
    <alternativeName>
        <fullName evidence="7">Phytocytokine ARACIN1</fullName>
        <shortName evidence="6">Mature form of ARACIN1</shortName>
        <shortName evidence="6">mARACIN1</shortName>
    </alternativeName>
    <alternativeName>
        <fullName evidence="7">Precursor of Peptide ARACIN 1</fullName>
    </alternativeName>
</protein>
<proteinExistence type="evidence at transcript level"/>
<organism>
    <name type="scientific">Arabidopsis thaliana</name>
    <name type="common">Mouse-ear cress</name>
    <dbReference type="NCBI Taxonomy" id="3702"/>
    <lineage>
        <taxon>Eukaryota</taxon>
        <taxon>Viridiplantae</taxon>
        <taxon>Streptophyta</taxon>
        <taxon>Embryophyta</taxon>
        <taxon>Tracheophyta</taxon>
        <taxon>Spermatophyta</taxon>
        <taxon>Magnoliopsida</taxon>
        <taxon>eudicotyledons</taxon>
        <taxon>Gunneridae</taxon>
        <taxon>Pentapetalae</taxon>
        <taxon>rosids</taxon>
        <taxon>malvids</taxon>
        <taxon>Brassicales</taxon>
        <taxon>Brassicaceae</taxon>
        <taxon>Camelineae</taxon>
        <taxon>Arabidopsis</taxon>
    </lineage>
</organism>
<gene>
    <name evidence="6" type="primary">ARACIN1</name>
    <name evidence="9" type="ordered locus">At5g36925</name>
    <name evidence="10" type="ORF">MLF18.7</name>
</gene>
<name>ACIN1_ARATH</name>
<reference key="1">
    <citation type="journal article" date="1998" name="DNA Res.">
        <title>Structural analysis of Arabidopsis thaliana chromosome 5. VIII. Sequence features of the regions of 1,081,958 bp covered by seventeen physically assigned P1 and TAC clones.</title>
        <authorList>
            <person name="Asamizu E."/>
            <person name="Sato S."/>
            <person name="Kaneko T."/>
            <person name="Nakamura Y."/>
            <person name="Kotani H."/>
            <person name="Miyajima N."/>
            <person name="Tabata S."/>
        </authorList>
    </citation>
    <scope>NUCLEOTIDE SEQUENCE [LARGE SCALE GENOMIC DNA]</scope>
    <source>
        <strain>cv. Columbia</strain>
    </source>
</reference>
<reference key="2">
    <citation type="journal article" date="2017" name="Plant J.">
        <title>Araport11: a complete reannotation of the Arabidopsis thaliana reference genome.</title>
        <authorList>
            <person name="Cheng C.Y."/>
            <person name="Krishnakumar V."/>
            <person name="Chan A.P."/>
            <person name="Thibaud-Nissen F."/>
            <person name="Schobel S."/>
            <person name="Town C.D."/>
        </authorList>
    </citation>
    <scope>GENOME REANNOTATION</scope>
    <source>
        <strain>cv. Columbia</strain>
    </source>
</reference>
<reference key="3">
    <citation type="journal article" date="2002" name="Science">
        <title>Functional annotation of a full-length Arabidopsis cDNA collection.</title>
        <authorList>
            <person name="Seki M."/>
            <person name="Narusaka M."/>
            <person name="Kamiya A."/>
            <person name="Ishida J."/>
            <person name="Satou M."/>
            <person name="Sakurai T."/>
            <person name="Nakajima M."/>
            <person name="Enju A."/>
            <person name="Akiyama K."/>
            <person name="Oono Y."/>
            <person name="Muramatsu M."/>
            <person name="Hayashizaki Y."/>
            <person name="Kawai J."/>
            <person name="Carninci P."/>
            <person name="Itoh M."/>
            <person name="Ishii Y."/>
            <person name="Arakawa T."/>
            <person name="Shibata K."/>
            <person name="Shinagawa A."/>
            <person name="Shinozaki K."/>
        </authorList>
    </citation>
    <scope>NUCLEOTIDE SEQUENCE [LARGE SCALE MRNA] OF 13-76</scope>
    <source>
        <strain>cv. Columbia</strain>
    </source>
</reference>
<reference key="4">
    <citation type="journal article" date="2003" name="Science">
        <title>Empirical analysis of transcriptional activity in the Arabidopsis genome.</title>
        <authorList>
            <person name="Yamada K."/>
            <person name="Lim J."/>
            <person name="Dale J.M."/>
            <person name="Chen H."/>
            <person name="Shinn P."/>
            <person name="Palm C.J."/>
            <person name="Southwick A.M."/>
            <person name="Wu H.C."/>
            <person name="Kim C.J."/>
            <person name="Nguyen M."/>
            <person name="Pham P.K."/>
            <person name="Cheuk R.F."/>
            <person name="Karlin-Newmann G."/>
            <person name="Liu S.X."/>
            <person name="Lam B."/>
            <person name="Sakano H."/>
            <person name="Wu T."/>
            <person name="Yu G."/>
            <person name="Miranda M."/>
            <person name="Quach H.L."/>
            <person name="Tripp M."/>
            <person name="Chang C.H."/>
            <person name="Lee J.M."/>
            <person name="Toriumi M.J."/>
            <person name="Chan M.M."/>
            <person name="Tang C.C."/>
            <person name="Onodera C.S."/>
            <person name="Deng J.M."/>
            <person name="Akiyama K."/>
            <person name="Ansari Y."/>
            <person name="Arakawa T."/>
            <person name="Banh J."/>
            <person name="Banno F."/>
            <person name="Bowser L."/>
            <person name="Brooks S.Y."/>
            <person name="Carninci P."/>
            <person name="Chao Q."/>
            <person name="Choy N."/>
            <person name="Enju A."/>
            <person name="Goldsmith A.D."/>
            <person name="Gurjal M."/>
            <person name="Hansen N.F."/>
            <person name="Hayashizaki Y."/>
            <person name="Johnson-Hopson C."/>
            <person name="Hsuan V.W."/>
            <person name="Iida K."/>
            <person name="Karnes M."/>
            <person name="Khan S."/>
            <person name="Koesema E."/>
            <person name="Ishida J."/>
            <person name="Jiang P.X."/>
            <person name="Jones T."/>
            <person name="Kawai J."/>
            <person name="Kamiya A."/>
            <person name="Meyers C."/>
            <person name="Nakajima M."/>
            <person name="Narusaka M."/>
            <person name="Seki M."/>
            <person name="Sakurai T."/>
            <person name="Satou M."/>
            <person name="Tamse R."/>
            <person name="Vaysberg M."/>
            <person name="Wallender E.K."/>
            <person name="Wong C."/>
            <person name="Yamamura Y."/>
            <person name="Yuan S."/>
            <person name="Shinozaki K."/>
            <person name="Davis R.W."/>
            <person name="Theologis A."/>
            <person name="Ecker J.R."/>
        </authorList>
    </citation>
    <scope>NUCLEOTIDE SEQUENCE [LARGE SCALE MRNA] OF 14-76</scope>
    <source>
        <strain>cv. Columbia</strain>
    </source>
</reference>
<reference key="5">
    <citation type="journal article" date="2012" name="Plant Cell Environ.">
        <title>A subcellular localization compendium of hydrogen peroxide-induced proteins.</title>
        <authorList>
            <person name="Inze A."/>
            <person name="Vanderauwera S."/>
            <person name="Hoeberichts F.A."/>
            <person name="Vandorpe M."/>
            <person name="Van Gaever T."/>
            <person name="Van Breusegem F."/>
        </authorList>
    </citation>
    <scope>INDUCTION BY HYDROGEN PEROXIDE</scope>
    <source>
        <strain>cv. Columbia</strain>
    </source>
</reference>
<reference key="6">
    <citation type="journal article" date="2015" name="Plant Physiol.">
        <title>ARACINs, Brassicaceae-specific peptides exhibiting antifungal activities against necrotrophic pathogens in Arabidopsis.</title>
        <authorList>
            <person name="Neukermans J."/>
            <person name="Inze A."/>
            <person name="Mathys J."/>
            <person name="De Coninck B."/>
            <person name="van de Cotte B."/>
            <person name="Cammue B.P."/>
            <person name="Van Breusegem F."/>
        </authorList>
    </citation>
    <scope>FUNCTION</scope>
    <scope>INDUCTION BY BOTRYTIS CINEREA; SALICYLIC ACID; JASMONIC ACID; HEAT AND COLD</scope>
    <scope>TISSUE SPECIFICITY</scope>
    <scope>SUBCELLULAR LOCATION</scope>
</reference>
<dbReference type="EMBL" id="AB016877">
    <property type="protein sequence ID" value="BAB11634.1"/>
    <property type="molecule type" value="Genomic_DNA"/>
</dbReference>
<dbReference type="EMBL" id="CP002688">
    <property type="protein sequence ID" value="AED94127.2"/>
    <property type="molecule type" value="Genomic_DNA"/>
</dbReference>
<dbReference type="EMBL" id="AK118668">
    <property type="protein sequence ID" value="BAC43263.1"/>
    <property type="status" value="ALT_INIT"/>
    <property type="molecule type" value="mRNA"/>
</dbReference>
<dbReference type="EMBL" id="BT004648">
    <property type="protein sequence ID" value="AAO42894.1"/>
    <property type="molecule type" value="mRNA"/>
</dbReference>
<dbReference type="RefSeq" id="NP_850917.2">
    <property type="nucleotide sequence ID" value="NM_180586.2"/>
</dbReference>
<dbReference type="PaxDb" id="3702-AT5G36925.1"/>
<dbReference type="EnsemblPlants" id="AT5G36925.1">
    <property type="protein sequence ID" value="AT5G36925.1"/>
    <property type="gene ID" value="AT5G36925"/>
</dbReference>
<dbReference type="GeneID" id="833661"/>
<dbReference type="Gramene" id="AT5G36925.1">
    <property type="protein sequence ID" value="AT5G36925.1"/>
    <property type="gene ID" value="AT5G36925"/>
</dbReference>
<dbReference type="KEGG" id="ath:AT5G36925"/>
<dbReference type="Araport" id="AT5G36925"/>
<dbReference type="TAIR" id="AT5G36925">
    <property type="gene designation" value="ARACIN1"/>
</dbReference>
<dbReference type="HOGENOM" id="CLU_2625348_0_0_1"/>
<dbReference type="InParanoid" id="Q9FIW0"/>
<dbReference type="OMA" id="KRAPPCR"/>
<dbReference type="PRO" id="PR:Q9FIW0"/>
<dbReference type="Proteomes" id="UP000006548">
    <property type="component" value="Chromosome 5"/>
</dbReference>
<dbReference type="ExpressionAtlas" id="Q9FIW0">
    <property type="expression patterns" value="baseline and differential"/>
</dbReference>
<dbReference type="GO" id="GO:0048046">
    <property type="term" value="C:apoplast"/>
    <property type="evidence" value="ECO:0000250"/>
    <property type="project" value="UniProtKB"/>
</dbReference>
<dbReference type="GO" id="GO:0005783">
    <property type="term" value="C:endoplasmic reticulum"/>
    <property type="evidence" value="ECO:0000314"/>
    <property type="project" value="UniProtKB"/>
</dbReference>
<dbReference type="GO" id="GO:0005886">
    <property type="term" value="C:plasma membrane"/>
    <property type="evidence" value="ECO:0007669"/>
    <property type="project" value="UniProtKB-SubCell"/>
</dbReference>
<dbReference type="GO" id="GO:0030275">
    <property type="term" value="F:LRR domain binding"/>
    <property type="evidence" value="ECO:0000250"/>
    <property type="project" value="UniProtKB"/>
</dbReference>
<dbReference type="GO" id="GO:0033612">
    <property type="term" value="F:receptor serine/threonine kinase binding"/>
    <property type="evidence" value="ECO:0000250"/>
    <property type="project" value="UniProtKB"/>
</dbReference>
<dbReference type="GO" id="GO:0050832">
    <property type="term" value="P:defense response to fungus"/>
    <property type="evidence" value="ECO:0000314"/>
    <property type="project" value="UniProtKB"/>
</dbReference>
<dbReference type="GO" id="GO:0009409">
    <property type="term" value="P:response to cold"/>
    <property type="evidence" value="ECO:0000270"/>
    <property type="project" value="UniProtKB"/>
</dbReference>
<dbReference type="GO" id="GO:0009620">
    <property type="term" value="P:response to fungus"/>
    <property type="evidence" value="ECO:0000270"/>
    <property type="project" value="UniProtKB"/>
</dbReference>
<dbReference type="GO" id="GO:0009408">
    <property type="term" value="P:response to heat"/>
    <property type="evidence" value="ECO:0000270"/>
    <property type="project" value="UniProtKB"/>
</dbReference>
<dbReference type="GO" id="GO:0042542">
    <property type="term" value="P:response to hydrogen peroxide"/>
    <property type="evidence" value="ECO:0000270"/>
    <property type="project" value="UniProtKB"/>
</dbReference>
<dbReference type="GO" id="GO:0009753">
    <property type="term" value="P:response to jasmonic acid"/>
    <property type="evidence" value="ECO:0000270"/>
    <property type="project" value="UniProtKB"/>
</dbReference>
<dbReference type="GO" id="GO:0009751">
    <property type="term" value="P:response to salicylic acid"/>
    <property type="evidence" value="ECO:0000270"/>
    <property type="project" value="UniProtKB"/>
</dbReference>
<evidence type="ECO:0000250" key="1">
    <source>
        <dbReference type="UniProtKB" id="B3H7I1"/>
    </source>
</evidence>
<evidence type="ECO:0000255" key="2"/>
<evidence type="ECO:0000256" key="3">
    <source>
        <dbReference type="SAM" id="MobiDB-lite"/>
    </source>
</evidence>
<evidence type="ECO:0000269" key="4">
    <source>
    </source>
</evidence>
<evidence type="ECO:0000269" key="5">
    <source>
    </source>
</evidence>
<evidence type="ECO:0000303" key="6">
    <source>
    </source>
</evidence>
<evidence type="ECO:0000305" key="7"/>
<evidence type="ECO:0000305" key="8">
    <source>
    </source>
</evidence>
<evidence type="ECO:0000312" key="9">
    <source>
        <dbReference type="Araport" id="AT5G36925"/>
    </source>
</evidence>
<evidence type="ECO:0000312" key="10">
    <source>
        <dbReference type="EMBL" id="BAB11634.1"/>
    </source>
</evidence>